<organism>
    <name type="scientific">Ruegeria pomeroyi (strain ATCC 700808 / DSM 15171 / DSS-3)</name>
    <name type="common">Silicibacter pomeroyi</name>
    <dbReference type="NCBI Taxonomy" id="246200"/>
    <lineage>
        <taxon>Bacteria</taxon>
        <taxon>Pseudomonadati</taxon>
        <taxon>Pseudomonadota</taxon>
        <taxon>Alphaproteobacteria</taxon>
        <taxon>Rhodobacterales</taxon>
        <taxon>Roseobacteraceae</taxon>
        <taxon>Ruegeria</taxon>
    </lineage>
</organism>
<sequence length="308" mass="32713">MIDTSAIRGKLTPNRDLSELTWLRVGGPADWLFQPADIDDLQTFLRMLPADIAVFPMGVGSNLIVRDGGLRAVVIRLGRGFNAIDVAGDTVTAGAAALDAHVARKAADAGVDLTFLRTIPGSIGGAVRMNAGCYGSYTADVFRSAQVVLRSGELATLGAAELNFRYRQSDLPEGAVLVSASLQGVPGDPEALHARMQAQLDKRDQTQPTKERSAGSTFRNPAGFSSTGRADDTHELKAWKVIDEAGMRGARLGGAQMSEMHSNFLINTGGATAADLEGLGEEVRKKVYDTSGITLEWEIMRVGDPLDG</sequence>
<accession>Q5LU58</accession>
<protein>
    <recommendedName>
        <fullName evidence="1">UDP-N-acetylenolpyruvoylglucosamine reductase</fullName>
        <ecNumber evidence="1">1.3.1.98</ecNumber>
    </recommendedName>
    <alternativeName>
        <fullName evidence="1">UDP-N-acetylmuramate dehydrogenase</fullName>
    </alternativeName>
</protein>
<comment type="function">
    <text evidence="1">Cell wall formation.</text>
</comment>
<comment type="catalytic activity">
    <reaction evidence="1">
        <text>UDP-N-acetyl-alpha-D-muramate + NADP(+) = UDP-N-acetyl-3-O-(1-carboxyvinyl)-alpha-D-glucosamine + NADPH + H(+)</text>
        <dbReference type="Rhea" id="RHEA:12248"/>
        <dbReference type="ChEBI" id="CHEBI:15378"/>
        <dbReference type="ChEBI" id="CHEBI:57783"/>
        <dbReference type="ChEBI" id="CHEBI:58349"/>
        <dbReference type="ChEBI" id="CHEBI:68483"/>
        <dbReference type="ChEBI" id="CHEBI:70757"/>
        <dbReference type="EC" id="1.3.1.98"/>
    </reaction>
</comment>
<comment type="cofactor">
    <cofactor evidence="1">
        <name>FAD</name>
        <dbReference type="ChEBI" id="CHEBI:57692"/>
    </cofactor>
</comment>
<comment type="pathway">
    <text evidence="1">Cell wall biogenesis; peptidoglycan biosynthesis.</text>
</comment>
<comment type="subcellular location">
    <subcellularLocation>
        <location evidence="1">Cytoplasm</location>
    </subcellularLocation>
</comment>
<comment type="similarity">
    <text evidence="1">Belongs to the MurB family.</text>
</comment>
<name>MURB_RUEPO</name>
<reference key="1">
    <citation type="journal article" date="2004" name="Nature">
        <title>Genome sequence of Silicibacter pomeroyi reveals adaptations to the marine environment.</title>
        <authorList>
            <person name="Moran M.A."/>
            <person name="Buchan A."/>
            <person name="Gonzalez J.M."/>
            <person name="Heidelberg J.F."/>
            <person name="Whitman W.B."/>
            <person name="Kiene R.P."/>
            <person name="Henriksen J.R."/>
            <person name="King G.M."/>
            <person name="Belas R."/>
            <person name="Fuqua C."/>
            <person name="Brinkac L.M."/>
            <person name="Lewis M."/>
            <person name="Johri S."/>
            <person name="Weaver B."/>
            <person name="Pai G."/>
            <person name="Eisen J.A."/>
            <person name="Rahe E."/>
            <person name="Sheldon W.M."/>
            <person name="Ye W."/>
            <person name="Miller T.R."/>
            <person name="Carlton J."/>
            <person name="Rasko D.A."/>
            <person name="Paulsen I.T."/>
            <person name="Ren Q."/>
            <person name="Daugherty S.C."/>
            <person name="DeBoy R.T."/>
            <person name="Dodson R.J."/>
            <person name="Durkin A.S."/>
            <person name="Madupu R."/>
            <person name="Nelson W.C."/>
            <person name="Sullivan S.A."/>
            <person name="Rosovitz M.J."/>
            <person name="Haft D.H."/>
            <person name="Selengut J."/>
            <person name="Ward N."/>
        </authorList>
    </citation>
    <scope>NUCLEOTIDE SEQUENCE [LARGE SCALE GENOMIC DNA]</scope>
    <source>
        <strain>ATCC 700808 / DSM 15171 / DSS-3</strain>
    </source>
</reference>
<reference key="2">
    <citation type="journal article" date="2014" name="Stand. Genomic Sci.">
        <title>An updated genome annotation for the model marine bacterium Ruegeria pomeroyi DSS-3.</title>
        <authorList>
            <person name="Rivers A.R."/>
            <person name="Smith C.B."/>
            <person name="Moran M.A."/>
        </authorList>
    </citation>
    <scope>GENOME REANNOTATION</scope>
    <source>
        <strain>ATCC 700808 / DSM 15171 / DSS-3</strain>
    </source>
</reference>
<keyword id="KW-0131">Cell cycle</keyword>
<keyword id="KW-0132">Cell division</keyword>
<keyword id="KW-0133">Cell shape</keyword>
<keyword id="KW-0961">Cell wall biogenesis/degradation</keyword>
<keyword id="KW-0963">Cytoplasm</keyword>
<keyword id="KW-0274">FAD</keyword>
<keyword id="KW-0285">Flavoprotein</keyword>
<keyword id="KW-0521">NADP</keyword>
<keyword id="KW-0560">Oxidoreductase</keyword>
<keyword id="KW-0573">Peptidoglycan synthesis</keyword>
<keyword id="KW-1185">Reference proteome</keyword>
<feature type="chain" id="PRO_0000224721" description="UDP-N-acetylenolpyruvoylglucosamine reductase">
    <location>
        <begin position="1"/>
        <end position="308"/>
    </location>
</feature>
<feature type="domain" description="FAD-binding PCMH-type" evidence="1">
    <location>
        <begin position="24"/>
        <end position="187"/>
    </location>
</feature>
<feature type="region of interest" description="Disordered" evidence="2">
    <location>
        <begin position="199"/>
        <end position="230"/>
    </location>
</feature>
<feature type="compositionally biased region" description="Basic and acidic residues" evidence="2">
    <location>
        <begin position="200"/>
        <end position="213"/>
    </location>
</feature>
<feature type="compositionally biased region" description="Polar residues" evidence="2">
    <location>
        <begin position="214"/>
        <end position="228"/>
    </location>
</feature>
<feature type="active site" evidence="1">
    <location>
        <position position="167"/>
    </location>
</feature>
<feature type="active site" description="Proton donor" evidence="1">
    <location>
        <position position="216"/>
    </location>
</feature>
<feature type="active site" evidence="1">
    <location>
        <position position="298"/>
    </location>
</feature>
<evidence type="ECO:0000255" key="1">
    <source>
        <dbReference type="HAMAP-Rule" id="MF_00037"/>
    </source>
</evidence>
<evidence type="ECO:0000256" key="2">
    <source>
        <dbReference type="SAM" id="MobiDB-lite"/>
    </source>
</evidence>
<dbReference type="EC" id="1.3.1.98" evidence="1"/>
<dbReference type="EMBL" id="CP000031">
    <property type="protein sequence ID" value="AAV94496.1"/>
    <property type="molecule type" value="Genomic_DNA"/>
</dbReference>
<dbReference type="RefSeq" id="WP_011046943.1">
    <property type="nucleotide sequence ID" value="NC_003911.12"/>
</dbReference>
<dbReference type="SMR" id="Q5LU58"/>
<dbReference type="STRING" id="246200.SPO1200"/>
<dbReference type="PaxDb" id="246200-SPO1200"/>
<dbReference type="KEGG" id="sil:SPO1200"/>
<dbReference type="eggNOG" id="COG0812">
    <property type="taxonomic scope" value="Bacteria"/>
</dbReference>
<dbReference type="HOGENOM" id="CLU_035304_1_0_5"/>
<dbReference type="OrthoDB" id="9804753at2"/>
<dbReference type="UniPathway" id="UPA00219"/>
<dbReference type="Proteomes" id="UP000001023">
    <property type="component" value="Chromosome"/>
</dbReference>
<dbReference type="GO" id="GO:0005829">
    <property type="term" value="C:cytosol"/>
    <property type="evidence" value="ECO:0007669"/>
    <property type="project" value="TreeGrafter"/>
</dbReference>
<dbReference type="GO" id="GO:0071949">
    <property type="term" value="F:FAD binding"/>
    <property type="evidence" value="ECO:0007669"/>
    <property type="project" value="InterPro"/>
</dbReference>
<dbReference type="GO" id="GO:0008762">
    <property type="term" value="F:UDP-N-acetylmuramate dehydrogenase activity"/>
    <property type="evidence" value="ECO:0007669"/>
    <property type="project" value="UniProtKB-UniRule"/>
</dbReference>
<dbReference type="GO" id="GO:0051301">
    <property type="term" value="P:cell division"/>
    <property type="evidence" value="ECO:0007669"/>
    <property type="project" value="UniProtKB-KW"/>
</dbReference>
<dbReference type="GO" id="GO:0071555">
    <property type="term" value="P:cell wall organization"/>
    <property type="evidence" value="ECO:0007669"/>
    <property type="project" value="UniProtKB-KW"/>
</dbReference>
<dbReference type="GO" id="GO:0009252">
    <property type="term" value="P:peptidoglycan biosynthetic process"/>
    <property type="evidence" value="ECO:0007669"/>
    <property type="project" value="UniProtKB-UniRule"/>
</dbReference>
<dbReference type="GO" id="GO:0008360">
    <property type="term" value="P:regulation of cell shape"/>
    <property type="evidence" value="ECO:0007669"/>
    <property type="project" value="UniProtKB-KW"/>
</dbReference>
<dbReference type="Gene3D" id="3.30.465.10">
    <property type="match status" value="1"/>
</dbReference>
<dbReference type="Gene3D" id="3.90.78.10">
    <property type="entry name" value="UDP-N-acetylenolpyruvoylglucosamine reductase, C-terminal domain"/>
    <property type="match status" value="1"/>
</dbReference>
<dbReference type="Gene3D" id="3.30.43.10">
    <property type="entry name" value="Uridine Diphospho-n-acetylenolpyruvylglucosamine Reductase, domain 2"/>
    <property type="match status" value="1"/>
</dbReference>
<dbReference type="HAMAP" id="MF_00037">
    <property type="entry name" value="MurB"/>
    <property type="match status" value="1"/>
</dbReference>
<dbReference type="InterPro" id="IPR016166">
    <property type="entry name" value="FAD-bd_PCMH"/>
</dbReference>
<dbReference type="InterPro" id="IPR036318">
    <property type="entry name" value="FAD-bd_PCMH-like_sf"/>
</dbReference>
<dbReference type="InterPro" id="IPR016167">
    <property type="entry name" value="FAD-bd_PCMH_sub1"/>
</dbReference>
<dbReference type="InterPro" id="IPR016169">
    <property type="entry name" value="FAD-bd_PCMH_sub2"/>
</dbReference>
<dbReference type="InterPro" id="IPR003170">
    <property type="entry name" value="MurB"/>
</dbReference>
<dbReference type="InterPro" id="IPR011601">
    <property type="entry name" value="MurB_C"/>
</dbReference>
<dbReference type="InterPro" id="IPR036635">
    <property type="entry name" value="MurB_C_sf"/>
</dbReference>
<dbReference type="InterPro" id="IPR006094">
    <property type="entry name" value="Oxid_FAD_bind_N"/>
</dbReference>
<dbReference type="NCBIfam" id="TIGR00179">
    <property type="entry name" value="murB"/>
    <property type="match status" value="1"/>
</dbReference>
<dbReference type="NCBIfam" id="NF010480">
    <property type="entry name" value="PRK13905.1"/>
    <property type="match status" value="1"/>
</dbReference>
<dbReference type="PANTHER" id="PTHR21071">
    <property type="entry name" value="UDP-N-ACETYLENOLPYRUVOYLGLUCOSAMINE REDUCTASE"/>
    <property type="match status" value="1"/>
</dbReference>
<dbReference type="PANTHER" id="PTHR21071:SF4">
    <property type="entry name" value="UDP-N-ACETYLENOLPYRUVOYLGLUCOSAMINE REDUCTASE"/>
    <property type="match status" value="1"/>
</dbReference>
<dbReference type="Pfam" id="PF01565">
    <property type="entry name" value="FAD_binding_4"/>
    <property type="match status" value="1"/>
</dbReference>
<dbReference type="Pfam" id="PF02873">
    <property type="entry name" value="MurB_C"/>
    <property type="match status" value="1"/>
</dbReference>
<dbReference type="SUPFAM" id="SSF56176">
    <property type="entry name" value="FAD-binding/transporter-associated domain-like"/>
    <property type="match status" value="1"/>
</dbReference>
<dbReference type="SUPFAM" id="SSF56194">
    <property type="entry name" value="Uridine diphospho-N-Acetylenolpyruvylglucosamine reductase, MurB, C-terminal domain"/>
    <property type="match status" value="1"/>
</dbReference>
<dbReference type="PROSITE" id="PS51387">
    <property type="entry name" value="FAD_PCMH"/>
    <property type="match status" value="1"/>
</dbReference>
<gene>
    <name evidence="1" type="primary">murB</name>
    <name type="ordered locus">SPO1200</name>
</gene>
<proteinExistence type="inferred from homology"/>